<organism>
    <name type="scientific">Streptococcus pyogenes</name>
    <dbReference type="NCBI Taxonomy" id="1314"/>
    <lineage>
        <taxon>Bacteria</taxon>
        <taxon>Bacillati</taxon>
        <taxon>Bacillota</taxon>
        <taxon>Bacilli</taxon>
        <taxon>Lactobacillales</taxon>
        <taxon>Streptococcaceae</taxon>
        <taxon>Streptococcus</taxon>
    </lineage>
</organism>
<accession>P0C0I8</accession>
<accession>Q54713</accession>
<feature type="chain" id="PRO_0000201367" description="UTP--glucose-1-phosphate uridylyltransferase">
    <location>
        <begin position="1"/>
        <end position="304"/>
    </location>
</feature>
<gene>
    <name type="primary">hasC</name>
</gene>
<evidence type="ECO:0000305" key="1"/>
<comment type="catalytic activity">
    <reaction>
        <text>alpha-D-glucose 1-phosphate + UTP + H(+) = UDP-alpha-D-glucose + diphosphate</text>
        <dbReference type="Rhea" id="RHEA:19889"/>
        <dbReference type="ChEBI" id="CHEBI:15378"/>
        <dbReference type="ChEBI" id="CHEBI:33019"/>
        <dbReference type="ChEBI" id="CHEBI:46398"/>
        <dbReference type="ChEBI" id="CHEBI:58601"/>
        <dbReference type="ChEBI" id="CHEBI:58885"/>
        <dbReference type="EC" id="2.7.7.9"/>
    </reaction>
</comment>
<comment type="pathway">
    <text>Carbohydrate metabolism; nucleotide-sugar metabolism.</text>
</comment>
<comment type="similarity">
    <text evidence="1">Belongs to the UDPGP type 2 family.</text>
</comment>
<proteinExistence type="inferred from homology"/>
<keyword id="KW-0548">Nucleotidyltransferase</keyword>
<keyword id="KW-0808">Transferase</keyword>
<sequence length="304" mass="33708">MTKVRKAIIPAAGLGTRFLPATKALAKEMLPIVDKPTIQFIVEEALKSGIEEILVVTGKAKRSIEDHFDSNFELEYNLQAKGKNELLKLVDETTAINLHFIRQSHPRGLGDAVLQAKAFVGNEPFVVMLGDDLMDITNASAKPLTKQLMEDYDKTHASTIAVMKVPHEDVSSYGVIAPQGKAVKGLYSVDTFVEKPQPEDAPSDLAIIGRYLLTPEIFDILERQTPGAGNEVQLTDAIDTLNKTQRVFAREFKGNRYDVGDKFGFMKTSIDYALEHPQVKEDLKNYIIKLGKALEKSKVPTHSK</sequence>
<reference key="1">
    <citation type="journal article" date="1995" name="J. Biol. Chem.">
        <title>Molecular characterization of hasC from an operon required for hyaluronic acid synthesis in group A streptococci. Demonstration of UDP-glucose pyrophosphorylase activity.</title>
        <authorList>
            <person name="Crater D.L."/>
            <person name="Dougherty B.A."/>
            <person name="van de Rijn I."/>
        </authorList>
    </citation>
    <scope>NUCLEOTIDE SEQUENCE [GENOMIC DNA]</scope>
    <source>
        <strain>WF51</strain>
    </source>
</reference>
<dbReference type="EC" id="2.7.7.9"/>
<dbReference type="EMBL" id="U33452">
    <property type="protein sequence ID" value="AAA91810.1"/>
    <property type="molecule type" value="Genomic_DNA"/>
</dbReference>
<dbReference type="RefSeq" id="WP_011018342.1">
    <property type="nucleotide sequence ID" value="NZ_WXZH01000038.1"/>
</dbReference>
<dbReference type="SMR" id="P0C0I8"/>
<dbReference type="STRING" id="1314.SD89_09605"/>
<dbReference type="PATRIC" id="fig|1314.197.peg.1741"/>
<dbReference type="eggNOG" id="COG1210">
    <property type="taxonomic scope" value="Bacteria"/>
</dbReference>
<dbReference type="UniPathway" id="UPA00215"/>
<dbReference type="GO" id="GO:0003983">
    <property type="term" value="F:UTP:glucose-1-phosphate uridylyltransferase activity"/>
    <property type="evidence" value="ECO:0007669"/>
    <property type="project" value="UniProtKB-EC"/>
</dbReference>
<dbReference type="GO" id="GO:0009058">
    <property type="term" value="P:biosynthetic process"/>
    <property type="evidence" value="ECO:0007669"/>
    <property type="project" value="InterPro"/>
</dbReference>
<dbReference type="GO" id="GO:0006011">
    <property type="term" value="P:UDP-alpha-D-glucose metabolic process"/>
    <property type="evidence" value="ECO:0007669"/>
    <property type="project" value="InterPro"/>
</dbReference>
<dbReference type="CDD" id="cd02541">
    <property type="entry name" value="UGPase_prokaryotic"/>
    <property type="match status" value="1"/>
</dbReference>
<dbReference type="Gene3D" id="3.90.550.10">
    <property type="entry name" value="Spore Coat Polysaccharide Biosynthesis Protein SpsA, Chain A"/>
    <property type="match status" value="1"/>
</dbReference>
<dbReference type="InterPro" id="IPR005771">
    <property type="entry name" value="GalU_uridylyltTrfase_bac/arc"/>
</dbReference>
<dbReference type="InterPro" id="IPR005835">
    <property type="entry name" value="NTP_transferase_dom"/>
</dbReference>
<dbReference type="InterPro" id="IPR029044">
    <property type="entry name" value="Nucleotide-diphossugar_trans"/>
</dbReference>
<dbReference type="NCBIfam" id="TIGR01099">
    <property type="entry name" value="galU"/>
    <property type="match status" value="1"/>
</dbReference>
<dbReference type="PANTHER" id="PTHR43197">
    <property type="entry name" value="UTP--GLUCOSE-1-PHOSPHATE URIDYLYLTRANSFERASE"/>
    <property type="match status" value="1"/>
</dbReference>
<dbReference type="PANTHER" id="PTHR43197:SF1">
    <property type="entry name" value="UTP--GLUCOSE-1-PHOSPHATE URIDYLYLTRANSFERASE"/>
    <property type="match status" value="1"/>
</dbReference>
<dbReference type="Pfam" id="PF00483">
    <property type="entry name" value="NTP_transferase"/>
    <property type="match status" value="1"/>
</dbReference>
<dbReference type="SUPFAM" id="SSF53448">
    <property type="entry name" value="Nucleotide-diphospho-sugar transferases"/>
    <property type="match status" value="1"/>
</dbReference>
<name>HASC_STRPY</name>
<protein>
    <recommendedName>
        <fullName>UTP--glucose-1-phosphate uridylyltransferase</fullName>
        <ecNumber>2.7.7.9</ecNumber>
    </recommendedName>
    <alternativeName>
        <fullName>Alpha-D-glucosyl-1-phosphate uridylyltransferase</fullName>
    </alternativeName>
    <alternativeName>
        <fullName>UDP-glucose pyrophosphorylase</fullName>
        <shortName>UDPGP</shortName>
    </alternativeName>
    <alternativeName>
        <fullName>Uridine diphosphoglucose pyrophosphorylase</fullName>
    </alternativeName>
</protein>